<accession>A4W3W3</accession>
<gene>
    <name evidence="1" type="primary">ilvD</name>
    <name type="ordered locus">SSU98_1894</name>
</gene>
<evidence type="ECO:0000255" key="1">
    <source>
        <dbReference type="HAMAP-Rule" id="MF_00012"/>
    </source>
</evidence>
<sequence length="571" mass="60691">MTDTNKLKDFRHRSSVYDSMVKSPNRAMLRATGMTDDSFEKPIVGVISTWAENTPCNIHLHDFGKLAKEGVKEAGAWPVQYGTITVADGIAMGTPGMRFSLTSRDIIADSIEAAMGGHNVDAFVAIGGCDKNMPGSMIAIANMDIPAVFAYGGTIAPGNLNGKDIDLVSVFEGIGKWNNGDLTAEEVRQIECNACPGPGGCGGMYTANTMATAIEVMGMSIPGSSSHPAESPEKKADIEEAGRAVVRMLELGIKPSDIMTREAFEDAITVTMALGGSTNATLHLLAIAHAANVDLTLEDFNDFQERVPHLADLKPSGKYVFQDLYNVGGVPAVMKYLLKNGFLHGDRITCTGKTVAENLKNFADLTPGQDVIMPLENPKRADGPLIILKGNLAPEGAVAKVSGVKVRNHTGPAKVFDSEEEAIEAVLTDEIVDGDVVVVRYVGPKGGPGMPEMLSLSSMIVGKGQGDKVALLTDGRFSGGTYGLVVGHIAPEAQDGGPIAYLRTGDLVTVDQDTKEITMHVSDQEIEERKKTTVIPPLYSRGVLGKYAHTVSSASKGAVTDFWRPERTGKK</sequence>
<keyword id="KW-0001">2Fe-2S</keyword>
<keyword id="KW-0028">Amino-acid biosynthesis</keyword>
<keyword id="KW-0100">Branched-chain amino acid biosynthesis</keyword>
<keyword id="KW-0408">Iron</keyword>
<keyword id="KW-0411">Iron-sulfur</keyword>
<keyword id="KW-0456">Lyase</keyword>
<keyword id="KW-0460">Magnesium</keyword>
<keyword id="KW-0479">Metal-binding</keyword>
<dbReference type="EC" id="4.2.1.9" evidence="1"/>
<dbReference type="EMBL" id="CP000408">
    <property type="protein sequence ID" value="ABP93052.1"/>
    <property type="molecule type" value="Genomic_DNA"/>
</dbReference>
<dbReference type="SMR" id="A4W3W3"/>
<dbReference type="KEGG" id="ssv:SSU98_1894"/>
<dbReference type="HOGENOM" id="CLU_014271_4_2_9"/>
<dbReference type="UniPathway" id="UPA00047">
    <property type="reaction ID" value="UER00057"/>
</dbReference>
<dbReference type="UniPathway" id="UPA00049">
    <property type="reaction ID" value="UER00061"/>
</dbReference>
<dbReference type="GO" id="GO:0051537">
    <property type="term" value="F:2 iron, 2 sulfur cluster binding"/>
    <property type="evidence" value="ECO:0007669"/>
    <property type="project" value="UniProtKB-UniRule"/>
</dbReference>
<dbReference type="GO" id="GO:0004160">
    <property type="term" value="F:dihydroxy-acid dehydratase activity"/>
    <property type="evidence" value="ECO:0007669"/>
    <property type="project" value="UniProtKB-UniRule"/>
</dbReference>
<dbReference type="GO" id="GO:0000287">
    <property type="term" value="F:magnesium ion binding"/>
    <property type="evidence" value="ECO:0007669"/>
    <property type="project" value="UniProtKB-UniRule"/>
</dbReference>
<dbReference type="GO" id="GO:0009097">
    <property type="term" value="P:isoleucine biosynthetic process"/>
    <property type="evidence" value="ECO:0007669"/>
    <property type="project" value="UniProtKB-UniRule"/>
</dbReference>
<dbReference type="GO" id="GO:0009099">
    <property type="term" value="P:L-valine biosynthetic process"/>
    <property type="evidence" value="ECO:0007669"/>
    <property type="project" value="UniProtKB-UniRule"/>
</dbReference>
<dbReference type="FunFam" id="3.50.30.80:FF:000001">
    <property type="entry name" value="Dihydroxy-acid dehydratase"/>
    <property type="match status" value="1"/>
</dbReference>
<dbReference type="Gene3D" id="3.50.30.80">
    <property type="entry name" value="IlvD/EDD C-terminal domain-like"/>
    <property type="match status" value="1"/>
</dbReference>
<dbReference type="HAMAP" id="MF_00012">
    <property type="entry name" value="IlvD"/>
    <property type="match status" value="1"/>
</dbReference>
<dbReference type="InterPro" id="IPR050165">
    <property type="entry name" value="DHAD_IlvD/Edd"/>
</dbReference>
<dbReference type="InterPro" id="IPR042096">
    <property type="entry name" value="Dihydro-acid_dehy_C"/>
</dbReference>
<dbReference type="InterPro" id="IPR004404">
    <property type="entry name" value="DihydroxyA_deHydtase"/>
</dbReference>
<dbReference type="InterPro" id="IPR020558">
    <property type="entry name" value="DiOHA_6PGluconate_deHydtase_CS"/>
</dbReference>
<dbReference type="InterPro" id="IPR056740">
    <property type="entry name" value="ILV_EDD_C"/>
</dbReference>
<dbReference type="InterPro" id="IPR000581">
    <property type="entry name" value="ILV_EDD_N"/>
</dbReference>
<dbReference type="InterPro" id="IPR037237">
    <property type="entry name" value="IlvD/EDD_N"/>
</dbReference>
<dbReference type="NCBIfam" id="TIGR00110">
    <property type="entry name" value="ilvD"/>
    <property type="match status" value="1"/>
</dbReference>
<dbReference type="NCBIfam" id="NF002068">
    <property type="entry name" value="PRK00911.1"/>
    <property type="match status" value="1"/>
</dbReference>
<dbReference type="PANTHER" id="PTHR21000">
    <property type="entry name" value="DIHYDROXY-ACID DEHYDRATASE DAD"/>
    <property type="match status" value="1"/>
</dbReference>
<dbReference type="PANTHER" id="PTHR21000:SF5">
    <property type="entry name" value="DIHYDROXY-ACID DEHYDRATASE, MITOCHONDRIAL"/>
    <property type="match status" value="1"/>
</dbReference>
<dbReference type="Pfam" id="PF24877">
    <property type="entry name" value="ILV_EDD_C"/>
    <property type="match status" value="1"/>
</dbReference>
<dbReference type="Pfam" id="PF00920">
    <property type="entry name" value="ILVD_EDD_N"/>
    <property type="match status" value="1"/>
</dbReference>
<dbReference type="SUPFAM" id="SSF143975">
    <property type="entry name" value="IlvD/EDD N-terminal domain-like"/>
    <property type="match status" value="1"/>
</dbReference>
<dbReference type="SUPFAM" id="SSF52016">
    <property type="entry name" value="LeuD/IlvD-like"/>
    <property type="match status" value="1"/>
</dbReference>
<dbReference type="PROSITE" id="PS00886">
    <property type="entry name" value="ILVD_EDD_1"/>
    <property type="match status" value="1"/>
</dbReference>
<dbReference type="PROSITE" id="PS00887">
    <property type="entry name" value="ILVD_EDD_2"/>
    <property type="match status" value="1"/>
</dbReference>
<comment type="function">
    <text evidence="1">Functions in the biosynthesis of branched-chain amino acids. Catalyzes the dehydration of (2R,3R)-2,3-dihydroxy-3-methylpentanoate (2,3-dihydroxy-3-methylvalerate) into 2-oxo-3-methylpentanoate (2-oxo-3-methylvalerate) and of (2R)-2,3-dihydroxy-3-methylbutanoate (2,3-dihydroxyisovalerate) into 2-oxo-3-methylbutanoate (2-oxoisovalerate), the penultimate precursor to L-isoleucine and L-valine, respectively.</text>
</comment>
<comment type="catalytic activity">
    <reaction evidence="1">
        <text>(2R)-2,3-dihydroxy-3-methylbutanoate = 3-methyl-2-oxobutanoate + H2O</text>
        <dbReference type="Rhea" id="RHEA:24809"/>
        <dbReference type="ChEBI" id="CHEBI:11851"/>
        <dbReference type="ChEBI" id="CHEBI:15377"/>
        <dbReference type="ChEBI" id="CHEBI:49072"/>
        <dbReference type="EC" id="4.2.1.9"/>
    </reaction>
    <physiologicalReaction direction="left-to-right" evidence="1">
        <dbReference type="Rhea" id="RHEA:24810"/>
    </physiologicalReaction>
</comment>
<comment type="catalytic activity">
    <reaction evidence="1">
        <text>(2R,3R)-2,3-dihydroxy-3-methylpentanoate = (S)-3-methyl-2-oxopentanoate + H2O</text>
        <dbReference type="Rhea" id="RHEA:27694"/>
        <dbReference type="ChEBI" id="CHEBI:15377"/>
        <dbReference type="ChEBI" id="CHEBI:35146"/>
        <dbReference type="ChEBI" id="CHEBI:49258"/>
        <dbReference type="EC" id="4.2.1.9"/>
    </reaction>
    <physiologicalReaction direction="left-to-right" evidence="1">
        <dbReference type="Rhea" id="RHEA:27695"/>
    </physiologicalReaction>
</comment>
<comment type="cofactor">
    <cofactor evidence="1">
        <name>[2Fe-2S] cluster</name>
        <dbReference type="ChEBI" id="CHEBI:190135"/>
    </cofactor>
    <text evidence="1">Binds 1 [2Fe-2S] cluster per subunit. This cluster acts as a Lewis acid cofactor.</text>
</comment>
<comment type="cofactor">
    <cofactor evidence="1">
        <name>Mg(2+)</name>
        <dbReference type="ChEBI" id="CHEBI:18420"/>
    </cofactor>
</comment>
<comment type="pathway">
    <text evidence="1">Amino-acid biosynthesis; L-isoleucine biosynthesis; L-isoleucine from 2-oxobutanoate: step 3/4.</text>
</comment>
<comment type="pathway">
    <text evidence="1">Amino-acid biosynthesis; L-valine biosynthesis; L-valine from pyruvate: step 3/4.</text>
</comment>
<comment type="subunit">
    <text evidence="1">Homodimer.</text>
</comment>
<comment type="similarity">
    <text evidence="1">Belongs to the IlvD/Edd family.</text>
</comment>
<protein>
    <recommendedName>
        <fullName evidence="1">Dihydroxy-acid dehydratase</fullName>
        <shortName evidence="1">DAD</shortName>
        <ecNumber evidence="1">4.2.1.9</ecNumber>
    </recommendedName>
</protein>
<reference key="1">
    <citation type="journal article" date="2007" name="PLoS ONE">
        <title>A glimpse of streptococcal toxic shock syndrome from comparative genomics of S. suis 2 Chinese isolates.</title>
        <authorList>
            <person name="Chen C."/>
            <person name="Tang J."/>
            <person name="Dong W."/>
            <person name="Wang C."/>
            <person name="Feng Y."/>
            <person name="Wang J."/>
            <person name="Zheng F."/>
            <person name="Pan X."/>
            <person name="Liu D."/>
            <person name="Li M."/>
            <person name="Song Y."/>
            <person name="Zhu X."/>
            <person name="Sun H."/>
            <person name="Feng T."/>
            <person name="Guo Z."/>
            <person name="Ju A."/>
            <person name="Ge J."/>
            <person name="Dong Y."/>
            <person name="Sun W."/>
            <person name="Jiang Y."/>
            <person name="Wang J."/>
            <person name="Yan J."/>
            <person name="Yang H."/>
            <person name="Wang X."/>
            <person name="Gao G.F."/>
            <person name="Yang R."/>
            <person name="Wang J."/>
            <person name="Yu J."/>
        </authorList>
    </citation>
    <scope>NUCLEOTIDE SEQUENCE [LARGE SCALE GENOMIC DNA]</scope>
    <source>
        <strain>98HAH33</strain>
    </source>
</reference>
<name>ILVD_STRS2</name>
<proteinExistence type="inferred from homology"/>
<feature type="chain" id="PRO_1000001070" description="Dihydroxy-acid dehydratase">
    <location>
        <begin position="1"/>
        <end position="571"/>
    </location>
</feature>
<feature type="active site" description="Proton acceptor" evidence="1">
    <location>
        <position position="478"/>
    </location>
</feature>
<feature type="binding site" evidence="1">
    <location>
        <position position="56"/>
    </location>
    <ligand>
        <name>[2Fe-2S] cluster</name>
        <dbReference type="ChEBI" id="CHEBI:190135"/>
    </ligand>
</feature>
<feature type="binding site" evidence="1">
    <location>
        <position position="88"/>
    </location>
    <ligand>
        <name>Mg(2+)</name>
        <dbReference type="ChEBI" id="CHEBI:18420"/>
    </ligand>
</feature>
<feature type="binding site" evidence="1">
    <location>
        <position position="129"/>
    </location>
    <ligand>
        <name>[2Fe-2S] cluster</name>
        <dbReference type="ChEBI" id="CHEBI:190135"/>
    </ligand>
</feature>
<feature type="binding site" evidence="1">
    <location>
        <position position="130"/>
    </location>
    <ligand>
        <name>Mg(2+)</name>
        <dbReference type="ChEBI" id="CHEBI:18420"/>
    </ligand>
</feature>
<feature type="binding site" description="via carbamate group" evidence="1">
    <location>
        <position position="131"/>
    </location>
    <ligand>
        <name>Mg(2+)</name>
        <dbReference type="ChEBI" id="CHEBI:18420"/>
    </ligand>
</feature>
<feature type="binding site" evidence="1">
    <location>
        <position position="201"/>
    </location>
    <ligand>
        <name>[2Fe-2S] cluster</name>
        <dbReference type="ChEBI" id="CHEBI:190135"/>
    </ligand>
</feature>
<feature type="binding site" evidence="1">
    <location>
        <position position="452"/>
    </location>
    <ligand>
        <name>Mg(2+)</name>
        <dbReference type="ChEBI" id="CHEBI:18420"/>
    </ligand>
</feature>
<feature type="modified residue" description="N6-carboxylysine" evidence="1">
    <location>
        <position position="131"/>
    </location>
</feature>
<organism>
    <name type="scientific">Streptococcus suis (strain 98HAH33)</name>
    <dbReference type="NCBI Taxonomy" id="391296"/>
    <lineage>
        <taxon>Bacteria</taxon>
        <taxon>Bacillati</taxon>
        <taxon>Bacillota</taxon>
        <taxon>Bacilli</taxon>
        <taxon>Lactobacillales</taxon>
        <taxon>Streptococcaceae</taxon>
        <taxon>Streptococcus</taxon>
    </lineage>
</organism>